<protein>
    <recommendedName>
        <fullName evidence="1">UPF0114 protein YqhA</fullName>
    </recommendedName>
</protein>
<keyword id="KW-1003">Cell membrane</keyword>
<keyword id="KW-0472">Membrane</keyword>
<keyword id="KW-0812">Transmembrane</keyword>
<keyword id="KW-1133">Transmembrane helix</keyword>
<gene>
    <name evidence="1" type="primary">yqhA</name>
    <name type="ordered locus">SCH_3095</name>
</gene>
<organism>
    <name type="scientific">Salmonella choleraesuis (strain SC-B67)</name>
    <dbReference type="NCBI Taxonomy" id="321314"/>
    <lineage>
        <taxon>Bacteria</taxon>
        <taxon>Pseudomonadati</taxon>
        <taxon>Pseudomonadota</taxon>
        <taxon>Gammaproteobacteria</taxon>
        <taxon>Enterobacterales</taxon>
        <taxon>Enterobacteriaceae</taxon>
        <taxon>Salmonella</taxon>
    </lineage>
</organism>
<dbReference type="EMBL" id="AE017220">
    <property type="protein sequence ID" value="AAX67001.1"/>
    <property type="molecule type" value="Genomic_DNA"/>
</dbReference>
<dbReference type="RefSeq" id="WP_000439335.1">
    <property type="nucleotide sequence ID" value="NC_006905.1"/>
</dbReference>
<dbReference type="KEGG" id="sec:SCH_3095"/>
<dbReference type="HOGENOM" id="CLU_097887_1_1_6"/>
<dbReference type="Proteomes" id="UP000000538">
    <property type="component" value="Chromosome"/>
</dbReference>
<dbReference type="GO" id="GO:0005886">
    <property type="term" value="C:plasma membrane"/>
    <property type="evidence" value="ECO:0007669"/>
    <property type="project" value="UniProtKB-SubCell"/>
</dbReference>
<dbReference type="HAMAP" id="MF_00143">
    <property type="entry name" value="UPF0114"/>
    <property type="match status" value="1"/>
</dbReference>
<dbReference type="InterPro" id="IPR005134">
    <property type="entry name" value="UPF0114"/>
</dbReference>
<dbReference type="InterPro" id="IPR020761">
    <property type="entry name" value="UPF0114_bac"/>
</dbReference>
<dbReference type="NCBIfam" id="TIGR00645">
    <property type="entry name" value="HI0507"/>
    <property type="match status" value="1"/>
</dbReference>
<dbReference type="PANTHER" id="PTHR38596">
    <property type="entry name" value="UPF0114 PROTEIN YQHA"/>
    <property type="match status" value="1"/>
</dbReference>
<dbReference type="PANTHER" id="PTHR38596:SF1">
    <property type="entry name" value="UPF0114 PROTEIN YQHA"/>
    <property type="match status" value="1"/>
</dbReference>
<dbReference type="Pfam" id="PF03350">
    <property type="entry name" value="UPF0114"/>
    <property type="match status" value="1"/>
</dbReference>
<accession>Q57JW1</accession>
<evidence type="ECO:0000255" key="1">
    <source>
        <dbReference type="HAMAP-Rule" id="MF_00143"/>
    </source>
</evidence>
<reference key="1">
    <citation type="journal article" date="2005" name="Nucleic Acids Res.">
        <title>The genome sequence of Salmonella enterica serovar Choleraesuis, a highly invasive and resistant zoonotic pathogen.</title>
        <authorList>
            <person name="Chiu C.-H."/>
            <person name="Tang P."/>
            <person name="Chu C."/>
            <person name="Hu S."/>
            <person name="Bao Q."/>
            <person name="Yu J."/>
            <person name="Chou Y.-Y."/>
            <person name="Wang H.-S."/>
            <person name="Lee Y.-S."/>
        </authorList>
    </citation>
    <scope>NUCLEOTIDE SEQUENCE [LARGE SCALE GENOMIC DNA]</scope>
    <source>
        <strain>SC-B67</strain>
    </source>
</reference>
<sequence>MERFLENVMYASRWLLAPVYFGLSLALIALALKFFQEILHVLPNVFALAEADLILVLLSLVDMTLVGGLLVMVMFSGYENFVSQLDISAGKEKLNWLGKMDATSLKNKVAASIVAISSIHLLRVFMDAKNVPDNKLMWYVIIHLTFVLSAFVMGYLDRLTRHNH</sequence>
<comment type="subcellular location">
    <subcellularLocation>
        <location evidence="1">Cell membrane</location>
        <topology evidence="1">Multi-pass membrane protein</topology>
    </subcellularLocation>
</comment>
<comment type="similarity">
    <text evidence="1">Belongs to the UPF0114 family.</text>
</comment>
<feature type="chain" id="PRO_1000009488" description="UPF0114 protein YqhA">
    <location>
        <begin position="1"/>
        <end position="164"/>
    </location>
</feature>
<feature type="transmembrane region" description="Helical" evidence="1">
    <location>
        <begin position="15"/>
        <end position="35"/>
    </location>
</feature>
<feature type="transmembrane region" description="Helical" evidence="1">
    <location>
        <begin position="53"/>
        <end position="73"/>
    </location>
</feature>
<feature type="transmembrane region" description="Helical" evidence="1">
    <location>
        <begin position="136"/>
        <end position="156"/>
    </location>
</feature>
<name>YQHA_SALCH</name>
<proteinExistence type="inferred from homology"/>